<proteinExistence type="inferred from homology"/>
<comment type="function">
    <text evidence="1">Responsible for the release of ribosomes from messenger RNA at the termination of protein biosynthesis. May increase the efficiency of translation by recycling ribosomes from one round of translation to another.</text>
</comment>
<comment type="subcellular location">
    <subcellularLocation>
        <location evidence="1">Cytoplasm</location>
    </subcellularLocation>
</comment>
<comment type="similarity">
    <text evidence="1">Belongs to the RRF family.</text>
</comment>
<accession>A5VQT0</accession>
<evidence type="ECO:0000255" key="1">
    <source>
        <dbReference type="HAMAP-Rule" id="MF_00040"/>
    </source>
</evidence>
<dbReference type="EMBL" id="CP000708">
    <property type="protein sequence ID" value="ABQ61542.1"/>
    <property type="molecule type" value="Genomic_DNA"/>
</dbReference>
<dbReference type="RefSeq" id="WP_002964286.1">
    <property type="nucleotide sequence ID" value="NC_009505.1"/>
</dbReference>
<dbReference type="SMR" id="A5VQT0"/>
<dbReference type="GeneID" id="97533591"/>
<dbReference type="KEGG" id="bov:BOV_1116"/>
<dbReference type="HOGENOM" id="CLU_073981_2_0_5"/>
<dbReference type="PhylomeDB" id="A5VQT0"/>
<dbReference type="Proteomes" id="UP000006383">
    <property type="component" value="Chromosome I"/>
</dbReference>
<dbReference type="GO" id="GO:0005829">
    <property type="term" value="C:cytosol"/>
    <property type="evidence" value="ECO:0007669"/>
    <property type="project" value="GOC"/>
</dbReference>
<dbReference type="GO" id="GO:0043023">
    <property type="term" value="F:ribosomal large subunit binding"/>
    <property type="evidence" value="ECO:0007669"/>
    <property type="project" value="TreeGrafter"/>
</dbReference>
<dbReference type="GO" id="GO:0002184">
    <property type="term" value="P:cytoplasmic translational termination"/>
    <property type="evidence" value="ECO:0007669"/>
    <property type="project" value="TreeGrafter"/>
</dbReference>
<dbReference type="CDD" id="cd00520">
    <property type="entry name" value="RRF"/>
    <property type="match status" value="1"/>
</dbReference>
<dbReference type="FunFam" id="1.10.132.20:FF:000001">
    <property type="entry name" value="Ribosome-recycling factor"/>
    <property type="match status" value="1"/>
</dbReference>
<dbReference type="FunFam" id="3.30.1360.40:FF:000001">
    <property type="entry name" value="Ribosome-recycling factor"/>
    <property type="match status" value="1"/>
</dbReference>
<dbReference type="Gene3D" id="3.30.1360.40">
    <property type="match status" value="1"/>
</dbReference>
<dbReference type="Gene3D" id="1.10.132.20">
    <property type="entry name" value="Ribosome-recycling factor"/>
    <property type="match status" value="1"/>
</dbReference>
<dbReference type="HAMAP" id="MF_00040">
    <property type="entry name" value="RRF"/>
    <property type="match status" value="1"/>
</dbReference>
<dbReference type="InterPro" id="IPR002661">
    <property type="entry name" value="Ribosome_recyc_fac"/>
</dbReference>
<dbReference type="InterPro" id="IPR023584">
    <property type="entry name" value="Ribosome_recyc_fac_dom"/>
</dbReference>
<dbReference type="InterPro" id="IPR036191">
    <property type="entry name" value="RRF_sf"/>
</dbReference>
<dbReference type="NCBIfam" id="TIGR00496">
    <property type="entry name" value="frr"/>
    <property type="match status" value="1"/>
</dbReference>
<dbReference type="PANTHER" id="PTHR20982:SF3">
    <property type="entry name" value="MITOCHONDRIAL RIBOSOME RECYCLING FACTOR PSEUDO 1"/>
    <property type="match status" value="1"/>
</dbReference>
<dbReference type="PANTHER" id="PTHR20982">
    <property type="entry name" value="RIBOSOME RECYCLING FACTOR"/>
    <property type="match status" value="1"/>
</dbReference>
<dbReference type="Pfam" id="PF01765">
    <property type="entry name" value="RRF"/>
    <property type="match status" value="1"/>
</dbReference>
<dbReference type="SUPFAM" id="SSF55194">
    <property type="entry name" value="Ribosome recycling factor, RRF"/>
    <property type="match status" value="1"/>
</dbReference>
<keyword id="KW-0963">Cytoplasm</keyword>
<keyword id="KW-0648">Protein biosynthesis</keyword>
<gene>
    <name evidence="1" type="primary">frr</name>
    <name type="ordered locus">BOV_1116</name>
</gene>
<name>RRF_BRUO2</name>
<sequence>MSDAFDINDLKRRMEGAVNALKHDLGGLRTGRASASLLEPITIEAYGSTMPINQVANISVPESRMLSVSVWDKSMVGAVERAIRDSGLGLNPITDGMTLRIPLPELNEQRRKELVKIAHQYAEQGRIAARHVRRDGMDQLKKLEKDSVISQDESRVLSEKVQKLTDDTIAEMDKIVAVKEGEIMQV</sequence>
<organism>
    <name type="scientific">Brucella ovis (strain ATCC 25840 / 63/290 / NCTC 10512)</name>
    <dbReference type="NCBI Taxonomy" id="444178"/>
    <lineage>
        <taxon>Bacteria</taxon>
        <taxon>Pseudomonadati</taxon>
        <taxon>Pseudomonadota</taxon>
        <taxon>Alphaproteobacteria</taxon>
        <taxon>Hyphomicrobiales</taxon>
        <taxon>Brucellaceae</taxon>
        <taxon>Brucella/Ochrobactrum group</taxon>
        <taxon>Brucella</taxon>
    </lineage>
</organism>
<feature type="chain" id="PRO_1000003113" description="Ribosome-recycling factor">
    <location>
        <begin position="1"/>
        <end position="186"/>
    </location>
</feature>
<reference key="1">
    <citation type="journal article" date="2009" name="PLoS ONE">
        <title>Genome degradation in Brucella ovis corresponds with narrowing of its host range and tissue tropism.</title>
        <authorList>
            <person name="Tsolis R.M."/>
            <person name="Seshadri R."/>
            <person name="Santos R.L."/>
            <person name="Sangari F.J."/>
            <person name="Lobo J.M."/>
            <person name="de Jong M.F."/>
            <person name="Ren Q."/>
            <person name="Myers G."/>
            <person name="Brinkac L.M."/>
            <person name="Nelson W.C."/>
            <person name="Deboy R.T."/>
            <person name="Angiuoli S."/>
            <person name="Khouri H."/>
            <person name="Dimitrov G."/>
            <person name="Robinson J.R."/>
            <person name="Mulligan S."/>
            <person name="Walker R.L."/>
            <person name="Elzer P.E."/>
            <person name="Hassan K.A."/>
            <person name="Paulsen I.T."/>
        </authorList>
    </citation>
    <scope>NUCLEOTIDE SEQUENCE [LARGE SCALE GENOMIC DNA]</scope>
    <source>
        <strain>ATCC 25840 / 63/290 / NCTC 10512</strain>
    </source>
</reference>
<protein>
    <recommendedName>
        <fullName evidence="1">Ribosome-recycling factor</fullName>
        <shortName evidence="1">RRF</shortName>
    </recommendedName>
    <alternativeName>
        <fullName evidence="1">Ribosome-releasing factor</fullName>
    </alternativeName>
</protein>